<comment type="function">
    <text evidence="1">Involved in the degradation of chitin. ChbG is essential for growth on the acetylated chitooligosaccharides chitobiose and chitotriose but is dispensable for growth on cellobiose and chitosan dimer, the deacetylated form of chitobiose. Deacetylation of chitobiose-6-P and chitotriose-6-P is necessary for both the activation of the chb promoter by the regulatory protein ChbR and the hydrolysis of phosphorylated beta-glucosides by the phospho-beta-glucosidase ChbF. Catalyzes the removal of only one acetyl group from chitobiose-6-P to yield monoacetylchitobiose-6-P, the inducer of ChbR and the substrate of ChbF.</text>
</comment>
<comment type="catalytic activity">
    <reaction evidence="1">
        <text>N,N'-diacetylchitobiose + H2O = N-acetyl-beta-D-glucosaminyl-(1-&gt;4)-D-glucosamine + acetate</text>
        <dbReference type="Rhea" id="RHEA:27469"/>
        <dbReference type="ChEBI" id="CHEBI:15377"/>
        <dbReference type="ChEBI" id="CHEBI:28681"/>
        <dbReference type="ChEBI" id="CHEBI:30089"/>
        <dbReference type="ChEBI" id="CHEBI:59910"/>
        <dbReference type="EC" id="3.5.1.105"/>
    </reaction>
</comment>
<comment type="catalytic activity">
    <reaction evidence="1">
        <text>diacetylchitobiose-6'-phosphate + H2O = N'-monoacetylchitobiose-6'-phosphate + acetate</text>
        <dbReference type="Rhea" id="RHEA:35083"/>
        <dbReference type="ChEBI" id="CHEBI:15377"/>
        <dbReference type="ChEBI" id="CHEBI:30089"/>
        <dbReference type="ChEBI" id="CHEBI:64883"/>
        <dbReference type="ChEBI" id="CHEBI:71315"/>
    </reaction>
</comment>
<comment type="cofactor">
    <cofactor evidence="1">
        <name>Mg(2+)</name>
        <dbReference type="ChEBI" id="CHEBI:18420"/>
    </cofactor>
</comment>
<comment type="pathway">
    <text evidence="1">Glycan degradation; chitin degradation.</text>
</comment>
<comment type="subunit">
    <text evidence="1">Homodimer.</text>
</comment>
<comment type="subcellular location">
    <subcellularLocation>
        <location evidence="1">Cytoplasm</location>
    </subcellularLocation>
</comment>
<comment type="similarity">
    <text evidence="1">Belongs to the YdjC deacetylase family. ChbG subfamily.</text>
</comment>
<evidence type="ECO:0000255" key="1">
    <source>
        <dbReference type="HAMAP-Rule" id="MF_01246"/>
    </source>
</evidence>
<name>CHBG_ECO45</name>
<gene>
    <name evidence="1" type="primary">chbG</name>
    <name type="ordered locus">ECS88_1785</name>
</gene>
<reference key="1">
    <citation type="journal article" date="2009" name="PLoS Genet.">
        <title>Organised genome dynamics in the Escherichia coli species results in highly diverse adaptive paths.</title>
        <authorList>
            <person name="Touchon M."/>
            <person name="Hoede C."/>
            <person name="Tenaillon O."/>
            <person name="Barbe V."/>
            <person name="Baeriswyl S."/>
            <person name="Bidet P."/>
            <person name="Bingen E."/>
            <person name="Bonacorsi S."/>
            <person name="Bouchier C."/>
            <person name="Bouvet O."/>
            <person name="Calteau A."/>
            <person name="Chiapello H."/>
            <person name="Clermont O."/>
            <person name="Cruveiller S."/>
            <person name="Danchin A."/>
            <person name="Diard M."/>
            <person name="Dossat C."/>
            <person name="Karoui M.E."/>
            <person name="Frapy E."/>
            <person name="Garry L."/>
            <person name="Ghigo J.M."/>
            <person name="Gilles A.M."/>
            <person name="Johnson J."/>
            <person name="Le Bouguenec C."/>
            <person name="Lescat M."/>
            <person name="Mangenot S."/>
            <person name="Martinez-Jehanne V."/>
            <person name="Matic I."/>
            <person name="Nassif X."/>
            <person name="Oztas S."/>
            <person name="Petit M.A."/>
            <person name="Pichon C."/>
            <person name="Rouy Z."/>
            <person name="Ruf C.S."/>
            <person name="Schneider D."/>
            <person name="Tourret J."/>
            <person name="Vacherie B."/>
            <person name="Vallenet D."/>
            <person name="Medigue C."/>
            <person name="Rocha E.P.C."/>
            <person name="Denamur E."/>
        </authorList>
    </citation>
    <scope>NUCLEOTIDE SEQUENCE [LARGE SCALE GENOMIC DNA]</scope>
    <source>
        <strain>S88 / ExPEC</strain>
    </source>
</reference>
<feature type="chain" id="PRO_1000139819" description="Chitooligosaccharide deacetylase">
    <location>
        <begin position="1"/>
        <end position="252"/>
    </location>
</feature>
<feature type="binding site" evidence="1">
    <location>
        <position position="61"/>
    </location>
    <ligand>
        <name>Mg(2+)</name>
        <dbReference type="ChEBI" id="CHEBI:18420"/>
    </ligand>
</feature>
<feature type="binding site" evidence="1">
    <location>
        <position position="125"/>
    </location>
    <ligand>
        <name>Mg(2+)</name>
        <dbReference type="ChEBI" id="CHEBI:18420"/>
    </ligand>
</feature>
<keyword id="KW-0119">Carbohydrate metabolism</keyword>
<keyword id="KW-0146">Chitin degradation</keyword>
<keyword id="KW-0963">Cytoplasm</keyword>
<keyword id="KW-0378">Hydrolase</keyword>
<keyword id="KW-0460">Magnesium</keyword>
<keyword id="KW-0479">Metal-binding</keyword>
<keyword id="KW-0624">Polysaccharide degradation</keyword>
<keyword id="KW-1185">Reference proteome</keyword>
<organism>
    <name type="scientific">Escherichia coli O45:K1 (strain S88 / ExPEC)</name>
    <dbReference type="NCBI Taxonomy" id="585035"/>
    <lineage>
        <taxon>Bacteria</taxon>
        <taxon>Pseudomonadati</taxon>
        <taxon>Pseudomonadota</taxon>
        <taxon>Gammaproteobacteria</taxon>
        <taxon>Enterobacterales</taxon>
        <taxon>Enterobacteriaceae</taxon>
        <taxon>Escherichia</taxon>
    </lineage>
</organism>
<proteinExistence type="inferred from homology"/>
<dbReference type="EC" id="3.5.1.105" evidence="1"/>
<dbReference type="EMBL" id="CU928161">
    <property type="protein sequence ID" value="CAR03093.1"/>
    <property type="molecule type" value="Genomic_DNA"/>
</dbReference>
<dbReference type="RefSeq" id="WP_000440473.1">
    <property type="nucleotide sequence ID" value="NC_011742.1"/>
</dbReference>
<dbReference type="SMR" id="B7MAU4"/>
<dbReference type="KEGG" id="ecz:ECS88_1785"/>
<dbReference type="HOGENOM" id="CLU_064244_4_1_6"/>
<dbReference type="UniPathway" id="UPA00349"/>
<dbReference type="Proteomes" id="UP000000747">
    <property type="component" value="Chromosome"/>
</dbReference>
<dbReference type="GO" id="GO:0005737">
    <property type="term" value="C:cytoplasm"/>
    <property type="evidence" value="ECO:0007669"/>
    <property type="project" value="UniProtKB-SubCell"/>
</dbReference>
<dbReference type="GO" id="GO:0036311">
    <property type="term" value="F:chitin disaccharide deacetylase activity"/>
    <property type="evidence" value="ECO:0007669"/>
    <property type="project" value="UniProtKB-UniRule"/>
</dbReference>
<dbReference type="GO" id="GO:0019213">
    <property type="term" value="F:deacetylase activity"/>
    <property type="evidence" value="ECO:0007669"/>
    <property type="project" value="TreeGrafter"/>
</dbReference>
<dbReference type="GO" id="GO:0046872">
    <property type="term" value="F:metal ion binding"/>
    <property type="evidence" value="ECO:0007669"/>
    <property type="project" value="UniProtKB-KW"/>
</dbReference>
<dbReference type="GO" id="GO:0006032">
    <property type="term" value="P:chitin catabolic process"/>
    <property type="evidence" value="ECO:0007669"/>
    <property type="project" value="UniProtKB-UniPathway"/>
</dbReference>
<dbReference type="GO" id="GO:0052777">
    <property type="term" value="P:diacetylchitobiose catabolic process"/>
    <property type="evidence" value="ECO:0007669"/>
    <property type="project" value="UniProtKB-UniRule"/>
</dbReference>
<dbReference type="GO" id="GO:0000272">
    <property type="term" value="P:polysaccharide catabolic process"/>
    <property type="evidence" value="ECO:0007669"/>
    <property type="project" value="UniProtKB-UniRule"/>
</dbReference>
<dbReference type="CDD" id="cd10803">
    <property type="entry name" value="YdjC_EF3048_like"/>
    <property type="match status" value="1"/>
</dbReference>
<dbReference type="FunFam" id="3.20.20.370:FF:000001">
    <property type="entry name" value="Chitooligosaccharide deacetylase"/>
    <property type="match status" value="1"/>
</dbReference>
<dbReference type="Gene3D" id="3.20.20.370">
    <property type="entry name" value="Glycoside hydrolase/deacetylase"/>
    <property type="match status" value="1"/>
</dbReference>
<dbReference type="HAMAP" id="MF_01246">
    <property type="entry name" value="COD"/>
    <property type="match status" value="1"/>
</dbReference>
<dbReference type="InterPro" id="IPR022948">
    <property type="entry name" value="COD_ChbG_bac"/>
</dbReference>
<dbReference type="InterPro" id="IPR011330">
    <property type="entry name" value="Glyco_hydro/deAcase_b/a-brl"/>
</dbReference>
<dbReference type="InterPro" id="IPR006879">
    <property type="entry name" value="YdjC-like"/>
</dbReference>
<dbReference type="NCBIfam" id="NF002559">
    <property type="entry name" value="PRK02134.1"/>
    <property type="match status" value="1"/>
</dbReference>
<dbReference type="PANTHER" id="PTHR31609:SF1">
    <property type="entry name" value="CARBOHYDRATE DEACETYLASE"/>
    <property type="match status" value="1"/>
</dbReference>
<dbReference type="PANTHER" id="PTHR31609">
    <property type="entry name" value="YDJC DEACETYLASE FAMILY MEMBER"/>
    <property type="match status" value="1"/>
</dbReference>
<dbReference type="Pfam" id="PF04794">
    <property type="entry name" value="YdjC"/>
    <property type="match status" value="1"/>
</dbReference>
<dbReference type="SUPFAM" id="SSF88713">
    <property type="entry name" value="Glycoside hydrolase/deacetylase"/>
    <property type="match status" value="1"/>
</dbReference>
<sequence length="252" mass="27986">MERLLIVNADDFGLSKGQNYGIIEACRNGIVTSTTALVNGQAIDHAVQLSRDEPSLAIGMHFVLTMGKPLTAMPGLTRDGVLGKWIWQLAEEGALPLEEITQELASQYLRFIELFGRKPTHLDSHHHVHMFPQIFPIVAKFAAEEGIALRIDRQPLSNDGDLPANLRSSQGFSSAFYGEEISETLFLQVLDDSSHRGERSLEVMCHPAFVDNTIRQSAYCFPRLTELDVLTSASLKYAIAERGYLLGSYHDV</sequence>
<accession>B7MAU4</accession>
<protein>
    <recommendedName>
        <fullName evidence="1">Chitooligosaccharide deacetylase</fullName>
        <shortName evidence="1">COD</shortName>
        <ecNumber evidence="1">3.5.1.105</ecNumber>
    </recommendedName>
    <alternativeName>
        <fullName evidence="1">Chitin disaccharide deacetylase</fullName>
    </alternativeName>
    <alternativeName>
        <fullName evidence="1">Chitobiose deacetylase</fullName>
    </alternativeName>
    <alternativeName>
        <fullName evidence="1">Chitobiose-6P deacetylase</fullName>
    </alternativeName>
    <alternativeName>
        <fullName evidence="1">Chitotriose deacetylase</fullName>
    </alternativeName>
    <alternativeName>
        <fullName evidence="1">Chitotriose-6P deacetylase</fullName>
    </alternativeName>
</protein>